<accession>B5F7S3</accession>
<evidence type="ECO:0000255" key="1">
    <source>
        <dbReference type="HAMAP-Rule" id="MF_01310"/>
    </source>
</evidence>
<evidence type="ECO:0000305" key="2"/>
<reference key="1">
    <citation type="journal article" date="2011" name="J. Bacteriol.">
        <title>Comparative genomics of 28 Salmonella enterica isolates: evidence for CRISPR-mediated adaptive sublineage evolution.</title>
        <authorList>
            <person name="Fricke W.F."/>
            <person name="Mammel M.K."/>
            <person name="McDermott P.F."/>
            <person name="Tartera C."/>
            <person name="White D.G."/>
            <person name="Leclerc J.E."/>
            <person name="Ravel J."/>
            <person name="Cebula T.A."/>
        </authorList>
    </citation>
    <scope>NUCLEOTIDE SEQUENCE [LARGE SCALE GENOMIC DNA]</scope>
    <source>
        <strain>SL483</strain>
    </source>
</reference>
<feature type="chain" id="PRO_1000141133" description="Small ribosomal subunit protein uS11">
    <location>
        <begin position="1"/>
        <end position="129"/>
    </location>
</feature>
<keyword id="KW-0687">Ribonucleoprotein</keyword>
<keyword id="KW-0689">Ribosomal protein</keyword>
<keyword id="KW-0694">RNA-binding</keyword>
<keyword id="KW-0699">rRNA-binding</keyword>
<protein>
    <recommendedName>
        <fullName evidence="1">Small ribosomal subunit protein uS11</fullName>
    </recommendedName>
    <alternativeName>
        <fullName evidence="2">30S ribosomal protein S11</fullName>
    </alternativeName>
</protein>
<comment type="function">
    <text evidence="1">Located on the platform of the 30S subunit, it bridges several disparate RNA helices of the 16S rRNA. Forms part of the Shine-Dalgarno cleft in the 70S ribosome.</text>
</comment>
<comment type="subunit">
    <text evidence="1">Part of the 30S ribosomal subunit. Interacts with proteins S7 and S18. Binds to IF-3.</text>
</comment>
<comment type="similarity">
    <text evidence="1">Belongs to the universal ribosomal protein uS11 family.</text>
</comment>
<name>RS11_SALA4</name>
<dbReference type="EMBL" id="CP001138">
    <property type="protein sequence ID" value="ACH48658.1"/>
    <property type="molecule type" value="Genomic_DNA"/>
</dbReference>
<dbReference type="RefSeq" id="WP_001029758.1">
    <property type="nucleotide sequence ID" value="NC_011149.1"/>
</dbReference>
<dbReference type="SMR" id="B5F7S3"/>
<dbReference type="GeneID" id="98390419"/>
<dbReference type="KEGG" id="sea:SeAg_B3612"/>
<dbReference type="HOGENOM" id="CLU_072439_5_0_6"/>
<dbReference type="Proteomes" id="UP000008819">
    <property type="component" value="Chromosome"/>
</dbReference>
<dbReference type="GO" id="GO:1990904">
    <property type="term" value="C:ribonucleoprotein complex"/>
    <property type="evidence" value="ECO:0007669"/>
    <property type="project" value="UniProtKB-KW"/>
</dbReference>
<dbReference type="GO" id="GO:0005840">
    <property type="term" value="C:ribosome"/>
    <property type="evidence" value="ECO:0007669"/>
    <property type="project" value="UniProtKB-KW"/>
</dbReference>
<dbReference type="GO" id="GO:0019843">
    <property type="term" value="F:rRNA binding"/>
    <property type="evidence" value="ECO:0007669"/>
    <property type="project" value="UniProtKB-UniRule"/>
</dbReference>
<dbReference type="GO" id="GO:0003735">
    <property type="term" value="F:structural constituent of ribosome"/>
    <property type="evidence" value="ECO:0007669"/>
    <property type="project" value="InterPro"/>
</dbReference>
<dbReference type="GO" id="GO:0006412">
    <property type="term" value="P:translation"/>
    <property type="evidence" value="ECO:0007669"/>
    <property type="project" value="UniProtKB-UniRule"/>
</dbReference>
<dbReference type="FunFam" id="3.30.420.80:FF:000001">
    <property type="entry name" value="30S ribosomal protein S11"/>
    <property type="match status" value="1"/>
</dbReference>
<dbReference type="Gene3D" id="3.30.420.80">
    <property type="entry name" value="Ribosomal protein S11"/>
    <property type="match status" value="1"/>
</dbReference>
<dbReference type="HAMAP" id="MF_01310">
    <property type="entry name" value="Ribosomal_uS11"/>
    <property type="match status" value="1"/>
</dbReference>
<dbReference type="InterPro" id="IPR001971">
    <property type="entry name" value="Ribosomal_uS11"/>
</dbReference>
<dbReference type="InterPro" id="IPR019981">
    <property type="entry name" value="Ribosomal_uS11_bac-type"/>
</dbReference>
<dbReference type="InterPro" id="IPR018102">
    <property type="entry name" value="Ribosomal_uS11_CS"/>
</dbReference>
<dbReference type="InterPro" id="IPR036967">
    <property type="entry name" value="Ribosomal_uS11_sf"/>
</dbReference>
<dbReference type="NCBIfam" id="NF003698">
    <property type="entry name" value="PRK05309.1"/>
    <property type="match status" value="1"/>
</dbReference>
<dbReference type="NCBIfam" id="TIGR03632">
    <property type="entry name" value="uS11_bact"/>
    <property type="match status" value="1"/>
</dbReference>
<dbReference type="PANTHER" id="PTHR11759">
    <property type="entry name" value="40S RIBOSOMAL PROTEIN S14/30S RIBOSOMAL PROTEIN S11"/>
    <property type="match status" value="1"/>
</dbReference>
<dbReference type="Pfam" id="PF00411">
    <property type="entry name" value="Ribosomal_S11"/>
    <property type="match status" value="1"/>
</dbReference>
<dbReference type="PIRSF" id="PIRSF002131">
    <property type="entry name" value="Ribosomal_S11"/>
    <property type="match status" value="1"/>
</dbReference>
<dbReference type="SUPFAM" id="SSF53137">
    <property type="entry name" value="Translational machinery components"/>
    <property type="match status" value="1"/>
</dbReference>
<dbReference type="PROSITE" id="PS00054">
    <property type="entry name" value="RIBOSOMAL_S11"/>
    <property type="match status" value="1"/>
</dbReference>
<organism>
    <name type="scientific">Salmonella agona (strain SL483)</name>
    <dbReference type="NCBI Taxonomy" id="454166"/>
    <lineage>
        <taxon>Bacteria</taxon>
        <taxon>Pseudomonadati</taxon>
        <taxon>Pseudomonadota</taxon>
        <taxon>Gammaproteobacteria</taxon>
        <taxon>Enterobacterales</taxon>
        <taxon>Enterobacteriaceae</taxon>
        <taxon>Salmonella</taxon>
    </lineage>
</organism>
<gene>
    <name evidence="1" type="primary">rpsK</name>
    <name type="ordered locus">SeAg_B3612</name>
</gene>
<sequence length="129" mass="13831">MAKAPVRARKRVRKQVSDGVAHIHASFNNTIVTITDRQGNALGWATAGGSGFRGSRKSTPFAAQVAAERCADAVKEYGIKNLEVMVKGPGPGRESTIRALNAAGFRITNITDVTPIPHNGCRPPKKRRV</sequence>
<proteinExistence type="inferred from homology"/>